<protein>
    <recommendedName>
        <fullName>Uncharacterized protein MJ1445</fullName>
    </recommendedName>
</protein>
<sequence length="176" mass="20713">MSMRKIYLISDTHFNHANIIKYCNRPFSNVEEMNKTLIKNWNNVVRDKDIVYFLGDLILSKNKAKKARELLELLNGEIVFIRGNHDKFGEKFRVIEYNGYKFMLIHNPDSSYTLNFDGWIIHGHHHANHLDEYPFINPKRKSINVSVEVINYKPVSLDLIVKLIEKGKVVRTINDL</sequence>
<accession>Q58840</accession>
<dbReference type="EMBL" id="L77117">
    <property type="protein sequence ID" value="AAB99460.1"/>
    <property type="molecule type" value="Genomic_DNA"/>
</dbReference>
<dbReference type="PIR" id="D64480">
    <property type="entry name" value="D64480"/>
</dbReference>
<dbReference type="SMR" id="Q58840"/>
<dbReference type="STRING" id="243232.MJ_1445"/>
<dbReference type="PaxDb" id="243232-MJ_1445"/>
<dbReference type="EnsemblBacteria" id="AAB99460">
    <property type="protein sequence ID" value="AAB99460"/>
    <property type="gene ID" value="MJ_1445"/>
</dbReference>
<dbReference type="KEGG" id="mja:MJ_1445"/>
<dbReference type="eggNOG" id="arCOG01154">
    <property type="taxonomic scope" value="Archaea"/>
</dbReference>
<dbReference type="HOGENOM" id="CLU_092313_3_1_2"/>
<dbReference type="InParanoid" id="Q58840"/>
<dbReference type="OrthoDB" id="113823at2157"/>
<dbReference type="PhylomeDB" id="Q58840"/>
<dbReference type="Proteomes" id="UP000000805">
    <property type="component" value="Chromosome"/>
</dbReference>
<dbReference type="GO" id="GO:0016787">
    <property type="term" value="F:hydrolase activity"/>
    <property type="evidence" value="ECO:0007669"/>
    <property type="project" value="InterPro"/>
</dbReference>
<dbReference type="CDD" id="cd07390">
    <property type="entry name" value="MPP_AQ1575"/>
    <property type="match status" value="1"/>
</dbReference>
<dbReference type="Gene3D" id="3.60.21.10">
    <property type="match status" value="1"/>
</dbReference>
<dbReference type="InterPro" id="IPR004843">
    <property type="entry name" value="Calcineurin-like_PHP_ApaH"/>
</dbReference>
<dbReference type="InterPro" id="IPR029052">
    <property type="entry name" value="Metallo-depent_PP-like"/>
</dbReference>
<dbReference type="Pfam" id="PF00149">
    <property type="entry name" value="Metallophos"/>
    <property type="match status" value="1"/>
</dbReference>
<dbReference type="SUPFAM" id="SSF56300">
    <property type="entry name" value="Metallo-dependent phosphatases"/>
    <property type="match status" value="1"/>
</dbReference>
<name>Y1445_METJA</name>
<gene>
    <name type="ordered locus">MJ1445</name>
</gene>
<reference key="1">
    <citation type="journal article" date="1996" name="Science">
        <title>Complete genome sequence of the methanogenic archaeon, Methanococcus jannaschii.</title>
        <authorList>
            <person name="Bult C.J."/>
            <person name="White O."/>
            <person name="Olsen G.J."/>
            <person name="Zhou L."/>
            <person name="Fleischmann R.D."/>
            <person name="Sutton G.G."/>
            <person name="Blake J.A."/>
            <person name="FitzGerald L.M."/>
            <person name="Clayton R.A."/>
            <person name="Gocayne J.D."/>
            <person name="Kerlavage A.R."/>
            <person name="Dougherty B.A."/>
            <person name="Tomb J.-F."/>
            <person name="Adams M.D."/>
            <person name="Reich C.I."/>
            <person name="Overbeek R."/>
            <person name="Kirkness E.F."/>
            <person name="Weinstock K.G."/>
            <person name="Merrick J.M."/>
            <person name="Glodek A."/>
            <person name="Scott J.L."/>
            <person name="Geoghagen N.S.M."/>
            <person name="Weidman J.F."/>
            <person name="Fuhrmann J.L."/>
            <person name="Nguyen D."/>
            <person name="Utterback T.R."/>
            <person name="Kelley J.M."/>
            <person name="Peterson J.D."/>
            <person name="Sadow P.W."/>
            <person name="Hanna M.C."/>
            <person name="Cotton M.D."/>
            <person name="Roberts K.M."/>
            <person name="Hurst M.A."/>
            <person name="Kaine B.P."/>
            <person name="Borodovsky M."/>
            <person name="Klenk H.-P."/>
            <person name="Fraser C.M."/>
            <person name="Smith H.O."/>
            <person name="Woese C.R."/>
            <person name="Venter J.C."/>
        </authorList>
    </citation>
    <scope>NUCLEOTIDE SEQUENCE [LARGE SCALE GENOMIC DNA]</scope>
    <source>
        <strain>ATCC 43067 / DSM 2661 / JAL-1 / JCM 10045 / NBRC 100440</strain>
    </source>
</reference>
<organism>
    <name type="scientific">Methanocaldococcus jannaschii (strain ATCC 43067 / DSM 2661 / JAL-1 / JCM 10045 / NBRC 100440)</name>
    <name type="common">Methanococcus jannaschii</name>
    <dbReference type="NCBI Taxonomy" id="243232"/>
    <lineage>
        <taxon>Archaea</taxon>
        <taxon>Methanobacteriati</taxon>
        <taxon>Methanobacteriota</taxon>
        <taxon>Methanomada group</taxon>
        <taxon>Methanococci</taxon>
        <taxon>Methanococcales</taxon>
        <taxon>Methanocaldococcaceae</taxon>
        <taxon>Methanocaldococcus</taxon>
    </lineage>
</organism>
<feature type="chain" id="PRO_0000107336" description="Uncharacterized protein MJ1445">
    <location>
        <begin position="1"/>
        <end position="176"/>
    </location>
</feature>
<keyword id="KW-1185">Reference proteome</keyword>
<proteinExistence type="predicted"/>